<name>RT31_ORYSJ</name>
<feature type="transit peptide" description="Mitochondrion" evidence="1">
    <location>
        <begin position="1"/>
        <end position="22"/>
    </location>
</feature>
<feature type="chain" id="PRO_0000030636" description="Small ribosomal subunit protein bTHXm">
    <location>
        <begin position="23"/>
        <end position="82"/>
    </location>
</feature>
<feature type="region of interest" description="Disordered" evidence="2">
    <location>
        <begin position="34"/>
        <end position="56"/>
    </location>
</feature>
<feature type="compositionally biased region" description="Basic residues" evidence="2">
    <location>
        <begin position="37"/>
        <end position="46"/>
    </location>
</feature>
<organism>
    <name type="scientific">Oryza sativa subsp. japonica</name>
    <name type="common">Rice</name>
    <dbReference type="NCBI Taxonomy" id="39947"/>
    <lineage>
        <taxon>Eukaryota</taxon>
        <taxon>Viridiplantae</taxon>
        <taxon>Streptophyta</taxon>
        <taxon>Embryophyta</taxon>
        <taxon>Tracheophyta</taxon>
        <taxon>Spermatophyta</taxon>
        <taxon>Magnoliopsida</taxon>
        <taxon>Liliopsida</taxon>
        <taxon>Poales</taxon>
        <taxon>Poaceae</taxon>
        <taxon>BOP clade</taxon>
        <taxon>Oryzoideae</taxon>
        <taxon>Oryzeae</taxon>
        <taxon>Oryzinae</taxon>
        <taxon>Oryza</taxon>
        <taxon>Oryza sativa</taxon>
    </lineage>
</organism>
<proteinExistence type="inferred from homology"/>
<reference key="1">
    <citation type="journal article" date="2005" name="Nature">
        <title>The map-based sequence of the rice genome.</title>
        <authorList>
            <consortium name="International rice genome sequencing project (IRGSP)"/>
        </authorList>
    </citation>
    <scope>NUCLEOTIDE SEQUENCE [LARGE SCALE GENOMIC DNA]</scope>
    <source>
        <strain>cv. Nipponbare</strain>
    </source>
</reference>
<reference key="2">
    <citation type="journal article" date="2008" name="Nucleic Acids Res.">
        <title>The rice annotation project database (RAP-DB): 2008 update.</title>
        <authorList>
            <consortium name="The rice annotation project (RAP)"/>
        </authorList>
    </citation>
    <scope>GENOME REANNOTATION</scope>
    <source>
        <strain>cv. Nipponbare</strain>
    </source>
</reference>
<reference key="3">
    <citation type="journal article" date="2013" name="Rice">
        <title>Improvement of the Oryza sativa Nipponbare reference genome using next generation sequence and optical map data.</title>
        <authorList>
            <person name="Kawahara Y."/>
            <person name="de la Bastide M."/>
            <person name="Hamilton J.P."/>
            <person name="Kanamori H."/>
            <person name="McCombie W.R."/>
            <person name="Ouyang S."/>
            <person name="Schwartz D.C."/>
            <person name="Tanaka T."/>
            <person name="Wu J."/>
            <person name="Zhou S."/>
            <person name="Childs K.L."/>
            <person name="Davidson R.M."/>
            <person name="Lin H."/>
            <person name="Quesada-Ocampo L."/>
            <person name="Vaillancourt B."/>
            <person name="Sakai H."/>
            <person name="Lee S.S."/>
            <person name="Kim J."/>
            <person name="Numa H."/>
            <person name="Itoh T."/>
            <person name="Buell C.R."/>
            <person name="Matsumoto T."/>
        </authorList>
    </citation>
    <scope>GENOME REANNOTATION</scope>
    <source>
        <strain>cv. Nipponbare</strain>
    </source>
</reference>
<reference key="4">
    <citation type="journal article" date="2005" name="PLoS Biol.">
        <title>The genomes of Oryza sativa: a history of duplications.</title>
        <authorList>
            <person name="Yu J."/>
            <person name="Wang J."/>
            <person name="Lin W."/>
            <person name="Li S."/>
            <person name="Li H."/>
            <person name="Zhou J."/>
            <person name="Ni P."/>
            <person name="Dong W."/>
            <person name="Hu S."/>
            <person name="Zeng C."/>
            <person name="Zhang J."/>
            <person name="Zhang Y."/>
            <person name="Li R."/>
            <person name="Xu Z."/>
            <person name="Li S."/>
            <person name="Li X."/>
            <person name="Zheng H."/>
            <person name="Cong L."/>
            <person name="Lin L."/>
            <person name="Yin J."/>
            <person name="Geng J."/>
            <person name="Li G."/>
            <person name="Shi J."/>
            <person name="Liu J."/>
            <person name="Lv H."/>
            <person name="Li J."/>
            <person name="Wang J."/>
            <person name="Deng Y."/>
            <person name="Ran L."/>
            <person name="Shi X."/>
            <person name="Wang X."/>
            <person name="Wu Q."/>
            <person name="Li C."/>
            <person name="Ren X."/>
            <person name="Wang J."/>
            <person name="Wang X."/>
            <person name="Li D."/>
            <person name="Liu D."/>
            <person name="Zhang X."/>
            <person name="Ji Z."/>
            <person name="Zhao W."/>
            <person name="Sun Y."/>
            <person name="Zhang Z."/>
            <person name="Bao J."/>
            <person name="Han Y."/>
            <person name="Dong L."/>
            <person name="Ji J."/>
            <person name="Chen P."/>
            <person name="Wu S."/>
            <person name="Liu J."/>
            <person name="Xiao Y."/>
            <person name="Bu D."/>
            <person name="Tan J."/>
            <person name="Yang L."/>
            <person name="Ye C."/>
            <person name="Zhang J."/>
            <person name="Xu J."/>
            <person name="Zhou Y."/>
            <person name="Yu Y."/>
            <person name="Zhang B."/>
            <person name="Zhuang S."/>
            <person name="Wei H."/>
            <person name="Liu B."/>
            <person name="Lei M."/>
            <person name="Yu H."/>
            <person name="Li Y."/>
            <person name="Xu H."/>
            <person name="Wei S."/>
            <person name="He X."/>
            <person name="Fang L."/>
            <person name="Zhang Z."/>
            <person name="Zhang Y."/>
            <person name="Huang X."/>
            <person name="Su Z."/>
            <person name="Tong W."/>
            <person name="Li J."/>
            <person name="Tong Z."/>
            <person name="Li S."/>
            <person name="Ye J."/>
            <person name="Wang L."/>
            <person name="Fang L."/>
            <person name="Lei T."/>
            <person name="Chen C.-S."/>
            <person name="Chen H.-C."/>
            <person name="Xu Z."/>
            <person name="Li H."/>
            <person name="Huang H."/>
            <person name="Zhang F."/>
            <person name="Xu H."/>
            <person name="Li N."/>
            <person name="Zhao C."/>
            <person name="Li S."/>
            <person name="Dong L."/>
            <person name="Huang Y."/>
            <person name="Li L."/>
            <person name="Xi Y."/>
            <person name="Qi Q."/>
            <person name="Li W."/>
            <person name="Zhang B."/>
            <person name="Hu W."/>
            <person name="Zhang Y."/>
            <person name="Tian X."/>
            <person name="Jiao Y."/>
            <person name="Liang X."/>
            <person name="Jin J."/>
            <person name="Gao L."/>
            <person name="Zheng W."/>
            <person name="Hao B."/>
            <person name="Liu S.-M."/>
            <person name="Wang W."/>
            <person name="Yuan L."/>
            <person name="Cao M."/>
            <person name="McDermott J."/>
            <person name="Samudrala R."/>
            <person name="Wang J."/>
            <person name="Wong G.K.-S."/>
            <person name="Yang H."/>
        </authorList>
    </citation>
    <scope>NUCLEOTIDE SEQUENCE [LARGE SCALE GENOMIC DNA]</scope>
    <source>
        <strain>cv. Nipponbare</strain>
    </source>
</reference>
<reference key="5">
    <citation type="journal article" date="2003" name="Science">
        <title>Collection, mapping, and annotation of over 28,000 cDNA clones from japonica rice.</title>
        <authorList>
            <consortium name="The rice full-length cDNA consortium"/>
        </authorList>
    </citation>
    <scope>NUCLEOTIDE SEQUENCE [LARGE SCALE MRNA]</scope>
    <source>
        <strain>cv. Nipponbare</strain>
    </source>
</reference>
<reference key="6">
    <citation type="journal article" date="1994" name="Plant J.">
        <title>Toward cataloguing all rice genes: large-scale sequencing of randomly chosen rice cDNAs from a callus cDNA library.</title>
        <authorList>
            <person name="Sasaki T."/>
            <person name="Song J."/>
            <person name="Koga-Ban Y."/>
            <person name="Matsui E."/>
            <person name="Fang F."/>
            <person name="Higo H."/>
            <person name="Nagasaki H."/>
            <person name="Hori M."/>
            <person name="Miya M."/>
            <person name="Murayama-Kayano E."/>
            <person name="Takiguchi T."/>
            <person name="Takasuga A."/>
            <person name="Niki T."/>
            <person name="Ishimaru K."/>
            <person name="Ikeda H."/>
            <person name="Yamamoto Y."/>
            <person name="Mukai Y."/>
            <person name="Ohta I."/>
            <person name="Miyadera N."/>
            <person name="Havukkala I."/>
            <person name="Minobe Y."/>
        </authorList>
    </citation>
    <scope>NUCLEOTIDE SEQUENCE [MRNA] OF 1-59</scope>
    <source>
        <strain>cv. Nipponbare</strain>
        <tissue>Callus</tissue>
    </source>
</reference>
<protein>
    <recommendedName>
        <fullName evidence="3">Small ribosomal subunit protein bTHXm</fullName>
    </recommendedName>
    <alternativeName>
        <fullName>30S ribosomal protein S31, mitochondrial</fullName>
    </alternativeName>
</protein>
<keyword id="KW-0496">Mitochondrion</keyword>
<keyword id="KW-1185">Reference proteome</keyword>
<keyword id="KW-0687">Ribonucleoprotein</keyword>
<keyword id="KW-0689">Ribosomal protein</keyword>
<keyword id="KW-0809">Transit peptide</keyword>
<sequence length="82" mass="9246">MAMRLAAAAAFVRRLVPARNPVISAEAEAVTCGRGDKKTKRGKRFKGSYGNARPKREKKIERIKDRVEVPRSTPWPLPFKLI</sequence>
<accession>P47909</accession>
<accession>Q0J066</accession>
<accession>Q651Z6</accession>
<comment type="subcellular location">
    <subcellularLocation>
        <location evidence="3">Mitochondrion</location>
    </subcellularLocation>
</comment>
<comment type="similarity">
    <text evidence="3">Belongs to the bacterial ribosomal protein bTHX family.</text>
</comment>
<gene>
    <name type="ordered locus">Os09g0528100</name>
    <name type="ordered locus">LOC_Os09g35900</name>
    <name type="ORF">OJ1439_F07.33</name>
    <name evidence="4" type="ORF">OsJ_30086</name>
</gene>
<evidence type="ECO:0000255" key="1"/>
<evidence type="ECO:0000256" key="2">
    <source>
        <dbReference type="SAM" id="MobiDB-lite"/>
    </source>
</evidence>
<evidence type="ECO:0000305" key="3"/>
<evidence type="ECO:0000312" key="4">
    <source>
        <dbReference type="EMBL" id="EAZ45436.1"/>
    </source>
</evidence>
<dbReference type="EMBL" id="AP005681">
    <property type="protein sequence ID" value="BAD46371.1"/>
    <property type="molecule type" value="Genomic_DNA"/>
</dbReference>
<dbReference type="EMBL" id="AP008215">
    <property type="protein sequence ID" value="BAF25649.1"/>
    <property type="molecule type" value="Genomic_DNA"/>
</dbReference>
<dbReference type="EMBL" id="AP014965">
    <property type="protein sequence ID" value="BAT09071.1"/>
    <property type="molecule type" value="Genomic_DNA"/>
</dbReference>
<dbReference type="EMBL" id="CM000146">
    <property type="protein sequence ID" value="EAZ45436.1"/>
    <property type="molecule type" value="Genomic_DNA"/>
</dbReference>
<dbReference type="EMBL" id="AK059096">
    <property type="protein sequence ID" value="BAG86890.1"/>
    <property type="molecule type" value="mRNA"/>
</dbReference>
<dbReference type="EMBL" id="D15858">
    <property type="status" value="NOT_ANNOTATED_CDS"/>
    <property type="molecule type" value="mRNA"/>
</dbReference>
<dbReference type="RefSeq" id="XP_015610880.1">
    <property type="nucleotide sequence ID" value="XM_015755394.1"/>
</dbReference>
<dbReference type="SMR" id="P47909"/>
<dbReference type="FunCoup" id="P47909">
    <property type="interactions" value="354"/>
</dbReference>
<dbReference type="STRING" id="39947.P47909"/>
<dbReference type="PaxDb" id="39947-P47909"/>
<dbReference type="EnsemblPlants" id="Os09t0528100-01">
    <property type="protein sequence ID" value="Os09t0528100-01"/>
    <property type="gene ID" value="Os09g0528100"/>
</dbReference>
<dbReference type="Gramene" id="Os09t0528100-01">
    <property type="protein sequence ID" value="Os09t0528100-01"/>
    <property type="gene ID" value="Os09g0528100"/>
</dbReference>
<dbReference type="KEGG" id="dosa:Os09g0528100"/>
<dbReference type="eggNOG" id="ENOG502S834">
    <property type="taxonomic scope" value="Eukaryota"/>
</dbReference>
<dbReference type="HOGENOM" id="CLU_154125_0_0_1"/>
<dbReference type="InParanoid" id="P47909"/>
<dbReference type="OMA" id="QPCASRF"/>
<dbReference type="Proteomes" id="UP000000763">
    <property type="component" value="Chromosome 9"/>
</dbReference>
<dbReference type="Proteomes" id="UP000007752">
    <property type="component" value="Chromosome 9"/>
</dbReference>
<dbReference type="Proteomes" id="UP000059680">
    <property type="component" value="Chromosome 9"/>
</dbReference>
<dbReference type="GO" id="GO:0005739">
    <property type="term" value="C:mitochondrion"/>
    <property type="evidence" value="ECO:0007669"/>
    <property type="project" value="UniProtKB-SubCell"/>
</dbReference>
<dbReference type="GO" id="GO:0009536">
    <property type="term" value="C:plastid"/>
    <property type="evidence" value="ECO:0000318"/>
    <property type="project" value="GO_Central"/>
</dbReference>
<dbReference type="GO" id="GO:1990904">
    <property type="term" value="C:ribonucleoprotein complex"/>
    <property type="evidence" value="ECO:0007669"/>
    <property type="project" value="UniProtKB-KW"/>
</dbReference>
<dbReference type="GO" id="GO:0005840">
    <property type="term" value="C:ribosome"/>
    <property type="evidence" value="ECO:0007669"/>
    <property type="project" value="UniProtKB-KW"/>
</dbReference>
<dbReference type="GO" id="GO:0032544">
    <property type="term" value="P:plastid translation"/>
    <property type="evidence" value="ECO:0000318"/>
    <property type="project" value="GO_Central"/>
</dbReference>
<dbReference type="InterPro" id="IPR030826">
    <property type="entry name" value="Ribosomal_bTHX/bTHXc/bTHXm"/>
</dbReference>
<dbReference type="InterPro" id="IPR044695">
    <property type="entry name" value="Ribosomal_bTHXc/bTHXc_plant"/>
</dbReference>
<dbReference type="NCBIfam" id="TIGR04560">
    <property type="entry name" value="ribo_THX"/>
    <property type="match status" value="1"/>
</dbReference>
<dbReference type="PANTHER" id="PTHR34550">
    <property type="entry name" value="30S RIBOSOMAL PROTEIN S31, CHLOROPLASTIC"/>
    <property type="match status" value="1"/>
</dbReference>
<dbReference type="PANTHER" id="PTHR34550:SF3">
    <property type="entry name" value="SMALL RIBOSOMAL SUBUNIT PROTEIN BTHXM"/>
    <property type="match status" value="1"/>
</dbReference>
<dbReference type="Pfam" id="PF17067">
    <property type="entry name" value="RPS31"/>
    <property type="match status" value="1"/>
</dbReference>